<proteinExistence type="evidence at protein level"/>
<name>SLE1_STAA8</name>
<reference key="1">
    <citation type="journal article" date="2005" name="Mol. Microbiol.">
        <title>Identification and molecular characterization of an N-acetylmuramyl-L-alanine amidase Sle1 involved in cell separation of Staphylococcus aureus.</title>
        <authorList>
            <person name="Kajimura J."/>
            <person name="Fujiwara T."/>
            <person name="Yamada S."/>
            <person name="Suzawa Y."/>
            <person name="Nishida T."/>
            <person name="Oyamada Y."/>
            <person name="Hayashi I."/>
            <person name="Yamagishi J."/>
            <person name="Komatsuzawa H."/>
            <person name="Sugai M."/>
        </authorList>
    </citation>
    <scope>NUCLEOTIDE SEQUENCE [GENOMIC DNA]</scope>
    <scope>PROTEIN SEQUENCE OF 26-39</scope>
    <scope>FUNCTION</scope>
</reference>
<reference key="2">
    <citation type="book" date="2006" name="Gram positive pathogens, 2nd edition">
        <title>The Staphylococcus aureus NCTC 8325 genome.</title>
        <editorList>
            <person name="Fischetti V."/>
            <person name="Novick R."/>
            <person name="Ferretti J."/>
            <person name="Portnoy D."/>
            <person name="Rood J."/>
        </editorList>
        <authorList>
            <person name="Gillaspy A.F."/>
            <person name="Worrell V."/>
            <person name="Orvis J."/>
            <person name="Roe B.A."/>
            <person name="Dyer D.W."/>
            <person name="Iandolo J.J."/>
        </authorList>
    </citation>
    <scope>NUCLEOTIDE SEQUENCE [LARGE SCALE GENOMIC DNA]</scope>
    <source>
        <strain>NCTC 8325 / PS 47</strain>
    </source>
</reference>
<reference key="3">
    <citation type="journal article" date="2010" name="J. Bacteriol.">
        <title>Synthetic effects of secG and secY2 mutations on exoproteome biogenesis in Staphylococcus aureus.</title>
        <authorList>
            <person name="Sibbald M.J."/>
            <person name="Winter T."/>
            <person name="van der Kooi-Pol M.M."/>
            <person name="Buist G."/>
            <person name="Tsompanidou E."/>
            <person name="Bosma T."/>
            <person name="Schafer T."/>
            <person name="Ohlsen K."/>
            <person name="Hecker M."/>
            <person name="Antelmann H."/>
            <person name="Engelmann S."/>
            <person name="van Dijl J.M."/>
        </authorList>
    </citation>
    <scope>IDENTIFICATION BY MASS SPECTROMETRY</scope>
    <scope>SUBCELLULAR LOCATION</scope>
    <scope>INDUCTION</scope>
    <source>
        <strain>RN4220</strain>
    </source>
</reference>
<gene>
    <name type="primary">sle1</name>
    <name type="synonym">aaa</name>
    <name type="ordered locus">SAOUHSC_00427</name>
</gene>
<feature type="signal peptide" evidence="2">
    <location>
        <begin position="1"/>
        <end position="25"/>
    </location>
</feature>
<feature type="chain" id="PRO_0000249326" description="N-acetylmuramoyl-L-alanine amidase sle1">
    <location>
        <begin position="26"/>
        <end position="334"/>
    </location>
</feature>
<feature type="domain" description="LysM 1" evidence="4">
    <location>
        <begin position="27"/>
        <end position="70"/>
    </location>
</feature>
<feature type="domain" description="LysM 2" evidence="4">
    <location>
        <begin position="91"/>
        <end position="134"/>
    </location>
</feature>
<feature type="domain" description="LysM 3" evidence="4">
    <location>
        <begin position="158"/>
        <end position="201"/>
    </location>
</feature>
<feature type="domain" description="Peptidase C51" evidence="3">
    <location>
        <begin position="210"/>
        <end position="334"/>
    </location>
</feature>
<feature type="region of interest" description="Disordered" evidence="5">
    <location>
        <begin position="71"/>
        <end position="90"/>
    </location>
</feature>
<feature type="compositionally biased region" description="Low complexity" evidence="5">
    <location>
        <begin position="71"/>
        <end position="86"/>
    </location>
</feature>
<comment type="function">
    <text evidence="6">Peptidoglycan hydrolase involved in the splitting of the septum during cell division. Binds to both alpha and beta-chains of human fibrinogen as well as fibronectin, which suggests a role in the colonization of host factor-coated material or host tissue. Also exhibits lytic activity against S.carnosus and S.aureus cells but not against M.luteus cells.</text>
</comment>
<comment type="catalytic activity">
    <reaction>
        <text>Hydrolyzes the link between N-acetylmuramoyl residues and L-amino acid residues in certain cell-wall glycopeptides.</text>
        <dbReference type="EC" id="3.5.1.28"/>
    </reaction>
</comment>
<comment type="subcellular location">
    <subcellularLocation>
        <location evidence="1">Secreted</location>
    </subcellularLocation>
    <subcellularLocation>
        <location evidence="7">Cell surface</location>
    </subcellularLocation>
</comment>
<comment type="induction">
    <text evidence="7">Repressed by mgrA. More protein is secreted in a secG mutant (at protein level).</text>
</comment>
<organism>
    <name type="scientific">Staphylococcus aureus (strain NCTC 8325 / PS 47)</name>
    <dbReference type="NCBI Taxonomy" id="93061"/>
    <lineage>
        <taxon>Bacteria</taxon>
        <taxon>Bacillati</taxon>
        <taxon>Bacillota</taxon>
        <taxon>Bacilli</taxon>
        <taxon>Bacillales</taxon>
        <taxon>Staphylococcaceae</taxon>
        <taxon>Staphylococcus</taxon>
    </lineage>
</organism>
<accession>Q2G0U9</accession>
<accession>Q33E91</accession>
<accession>Q99WD8</accession>
<sequence>MQKKVIAAIIGTSAISAVAATQANAATTHTVKPGESVWAISNKYGISIAKLKSLNNLTSNLIFPNQVLKVSGSSNSTSNSSRPSTNSGGGSYYTVQAGDSLSLIASKYGTTYQNIMRLNGLNNFFIYPGQKLKVSGTASSSNAASNSSRPSTNSGGGSYYTVQAGDSLSLIASKYGTTYQKIMSLNGLNNFFIYPGQKLKVTGNASTNSGSATTTNRGYNTPVFSHQNLYTWGQCTYHVFNRRAEIGKGISTYWWNANNWDNAAAADGYTIDNRPTVGSIAQTDVGYYGHVMFVERVNNDGSILVSEMNYSAAPGILTYRTVPAYQVNNYRYIH</sequence>
<keyword id="KW-0929">Antimicrobial</keyword>
<keyword id="KW-0081">Bacteriolytic enzyme</keyword>
<keyword id="KW-0131">Cell cycle</keyword>
<keyword id="KW-0132">Cell division</keyword>
<keyword id="KW-0961">Cell wall biogenesis/degradation</keyword>
<keyword id="KW-0903">Direct protein sequencing</keyword>
<keyword id="KW-0378">Hydrolase</keyword>
<keyword id="KW-1185">Reference proteome</keyword>
<keyword id="KW-0677">Repeat</keyword>
<keyword id="KW-0964">Secreted</keyword>
<keyword id="KW-0717">Septation</keyword>
<keyword id="KW-0732">Signal</keyword>
<keyword id="KW-0843">Virulence</keyword>
<protein>
    <recommendedName>
        <fullName>N-acetylmuramoyl-L-alanine amidase sle1</fullName>
        <ecNumber>3.5.1.28</ecNumber>
    </recommendedName>
</protein>
<dbReference type="EC" id="3.5.1.28"/>
<dbReference type="EMBL" id="AB113206">
    <property type="protein sequence ID" value="BAE47503.1"/>
    <property type="molecule type" value="Genomic_DNA"/>
</dbReference>
<dbReference type="EMBL" id="CP000253">
    <property type="protein sequence ID" value="ABD29587.1"/>
    <property type="molecule type" value="Genomic_DNA"/>
</dbReference>
<dbReference type="RefSeq" id="WP_001170264.1">
    <property type="nucleotide sequence ID" value="NZ_LS483365.1"/>
</dbReference>
<dbReference type="RefSeq" id="YP_499011.1">
    <property type="nucleotide sequence ID" value="NC_007795.1"/>
</dbReference>
<dbReference type="SMR" id="Q2G0U9"/>
<dbReference type="STRING" id="93061.SAOUHSC_00427"/>
<dbReference type="CAZy" id="CBM50">
    <property type="family name" value="Carbohydrate-Binding Module Family 50"/>
</dbReference>
<dbReference type="PaxDb" id="1280-SAXN108_0515"/>
<dbReference type="GeneID" id="3919100"/>
<dbReference type="KEGG" id="sao:SAOUHSC_00427"/>
<dbReference type="PATRIC" id="fig|93061.5.peg.391"/>
<dbReference type="eggNOG" id="COG1388">
    <property type="taxonomic scope" value="Bacteria"/>
</dbReference>
<dbReference type="eggNOG" id="COG3942">
    <property type="taxonomic scope" value="Bacteria"/>
</dbReference>
<dbReference type="HOGENOM" id="CLU_016043_1_3_9"/>
<dbReference type="OrthoDB" id="9813368at2"/>
<dbReference type="PRO" id="PR:Q2G0U9"/>
<dbReference type="Proteomes" id="UP000008816">
    <property type="component" value="Chromosome"/>
</dbReference>
<dbReference type="GO" id="GO:0009986">
    <property type="term" value="C:cell surface"/>
    <property type="evidence" value="ECO:0007669"/>
    <property type="project" value="UniProtKB-SubCell"/>
</dbReference>
<dbReference type="GO" id="GO:0005576">
    <property type="term" value="C:extracellular region"/>
    <property type="evidence" value="ECO:0007669"/>
    <property type="project" value="UniProtKB-SubCell"/>
</dbReference>
<dbReference type="GO" id="GO:0008932">
    <property type="term" value="F:lytic endotransglycosylase activity"/>
    <property type="evidence" value="ECO:0000318"/>
    <property type="project" value="GO_Central"/>
</dbReference>
<dbReference type="GO" id="GO:0008745">
    <property type="term" value="F:N-acetylmuramoyl-L-alanine amidase activity"/>
    <property type="evidence" value="ECO:0007669"/>
    <property type="project" value="UniProtKB-EC"/>
</dbReference>
<dbReference type="GO" id="GO:0071555">
    <property type="term" value="P:cell wall organization"/>
    <property type="evidence" value="ECO:0007669"/>
    <property type="project" value="UniProtKB-KW"/>
</dbReference>
<dbReference type="GO" id="GO:0042742">
    <property type="term" value="P:defense response to bacterium"/>
    <property type="evidence" value="ECO:0007669"/>
    <property type="project" value="UniProtKB-KW"/>
</dbReference>
<dbReference type="GO" id="GO:0000917">
    <property type="term" value="P:division septum assembly"/>
    <property type="evidence" value="ECO:0007669"/>
    <property type="project" value="UniProtKB-KW"/>
</dbReference>
<dbReference type="GO" id="GO:0031640">
    <property type="term" value="P:killing of cells of another organism"/>
    <property type="evidence" value="ECO:0007669"/>
    <property type="project" value="UniProtKB-KW"/>
</dbReference>
<dbReference type="CDD" id="cd00118">
    <property type="entry name" value="LysM"/>
    <property type="match status" value="3"/>
</dbReference>
<dbReference type="Gene3D" id="3.90.1720.10">
    <property type="entry name" value="endopeptidase domain like (from Nostoc punctiforme)"/>
    <property type="match status" value="1"/>
</dbReference>
<dbReference type="Gene3D" id="3.10.350.10">
    <property type="entry name" value="LysM domain"/>
    <property type="match status" value="3"/>
</dbReference>
<dbReference type="InterPro" id="IPR007921">
    <property type="entry name" value="CHAP_dom"/>
</dbReference>
<dbReference type="InterPro" id="IPR018392">
    <property type="entry name" value="LysM_dom"/>
</dbReference>
<dbReference type="InterPro" id="IPR036779">
    <property type="entry name" value="LysM_dom_sf"/>
</dbReference>
<dbReference type="InterPro" id="IPR038765">
    <property type="entry name" value="Papain-like_cys_pep_sf"/>
</dbReference>
<dbReference type="PANTHER" id="PTHR33734">
    <property type="entry name" value="LYSM DOMAIN-CONTAINING GPI-ANCHORED PROTEIN 2"/>
    <property type="match status" value="1"/>
</dbReference>
<dbReference type="PANTHER" id="PTHR33734:SF22">
    <property type="entry name" value="MEMBRANE-BOUND LYTIC MUREIN TRANSGLYCOSYLASE D"/>
    <property type="match status" value="1"/>
</dbReference>
<dbReference type="Pfam" id="PF05257">
    <property type="entry name" value="CHAP"/>
    <property type="match status" value="1"/>
</dbReference>
<dbReference type="Pfam" id="PF01476">
    <property type="entry name" value="LysM"/>
    <property type="match status" value="3"/>
</dbReference>
<dbReference type="SMART" id="SM00257">
    <property type="entry name" value="LysM"/>
    <property type="match status" value="3"/>
</dbReference>
<dbReference type="SUPFAM" id="SSF54001">
    <property type="entry name" value="Cysteine proteinases"/>
    <property type="match status" value="1"/>
</dbReference>
<dbReference type="SUPFAM" id="SSF54106">
    <property type="entry name" value="LysM domain"/>
    <property type="match status" value="3"/>
</dbReference>
<dbReference type="PROSITE" id="PS50911">
    <property type="entry name" value="CHAP"/>
    <property type="match status" value="1"/>
</dbReference>
<dbReference type="PROSITE" id="PS51782">
    <property type="entry name" value="LYSM"/>
    <property type="match status" value="3"/>
</dbReference>
<evidence type="ECO:0000250" key="1"/>
<evidence type="ECO:0000255" key="2"/>
<evidence type="ECO:0000255" key="3">
    <source>
        <dbReference type="PROSITE-ProRule" id="PRU00048"/>
    </source>
</evidence>
<evidence type="ECO:0000255" key="4">
    <source>
        <dbReference type="PROSITE-ProRule" id="PRU01118"/>
    </source>
</evidence>
<evidence type="ECO:0000256" key="5">
    <source>
        <dbReference type="SAM" id="MobiDB-lite"/>
    </source>
</evidence>
<evidence type="ECO:0000269" key="6">
    <source>
    </source>
</evidence>
<evidence type="ECO:0000269" key="7">
    <source>
    </source>
</evidence>